<accession>P21560</accession>
<accession>D6W3F5</accession>
<comment type="function">
    <text>Chaperone required for the assembly of ubiquinol-cytochrome c reductase of the mitochondrial respiratory chain.</text>
</comment>
<comment type="interaction">
    <interactant intactId="EBI-4134">
        <id>P21560</id>
    </interactant>
    <interactant intactId="EBI-4142">
        <id>P07253</id>
        <label>CBP6</label>
    </interactant>
    <organismsDiffer>false</organismsDiffer>
    <experiments>5</experiments>
</comment>
<comment type="interaction">
    <interactant intactId="EBI-4134">
        <id>P21560</id>
    </interactant>
    <interactant intactId="EBI-402">
        <id>P36517</id>
        <label>MRPL4</label>
    </interactant>
    <organismsDiffer>false</organismsDiffer>
    <experiments>3</experiments>
</comment>
<comment type="subcellular location">
    <subcellularLocation>
        <location>Mitochondrion membrane</location>
    </subcellularLocation>
</comment>
<comment type="miscellaneous">
    <text evidence="2">Present with 14200 molecules/cell in log phase SD medium.</text>
</comment>
<comment type="similarity">
    <text evidence="3">Belongs to the CBP3 family.</text>
</comment>
<reference key="1">
    <citation type="journal article" date="1989" name="J. Biol. Chem.">
        <title>Identification and characterization of a new gene (CBP3) required for the expression of yeast coenzyme QH2-cytochrome c reductase.</title>
        <authorList>
            <person name="Wu M."/>
            <person name="Tzagoloff A."/>
        </authorList>
    </citation>
    <scope>NUCLEOTIDE SEQUENCE [GENOMIC DNA]</scope>
</reference>
<reference key="2">
    <citation type="journal article" date="1997" name="Nature">
        <title>The nucleotide sequence of Saccharomyces cerevisiae chromosome XVI.</title>
        <authorList>
            <person name="Bussey H."/>
            <person name="Storms R.K."/>
            <person name="Ahmed A."/>
            <person name="Albermann K."/>
            <person name="Allen E."/>
            <person name="Ansorge W."/>
            <person name="Araujo R."/>
            <person name="Aparicio A."/>
            <person name="Barrell B.G."/>
            <person name="Badcock K."/>
            <person name="Benes V."/>
            <person name="Botstein D."/>
            <person name="Bowman S."/>
            <person name="Brueckner M."/>
            <person name="Carpenter J."/>
            <person name="Cherry J.M."/>
            <person name="Chung E."/>
            <person name="Churcher C.M."/>
            <person name="Coster F."/>
            <person name="Davis K."/>
            <person name="Davis R.W."/>
            <person name="Dietrich F.S."/>
            <person name="Delius H."/>
            <person name="DiPaolo T."/>
            <person name="Dubois E."/>
            <person name="Duesterhoeft A."/>
            <person name="Duncan M."/>
            <person name="Floeth M."/>
            <person name="Fortin N."/>
            <person name="Friesen J.D."/>
            <person name="Fritz C."/>
            <person name="Goffeau A."/>
            <person name="Hall J."/>
            <person name="Hebling U."/>
            <person name="Heumann K."/>
            <person name="Hilbert H."/>
            <person name="Hillier L.W."/>
            <person name="Hunicke-Smith S."/>
            <person name="Hyman R.W."/>
            <person name="Johnston M."/>
            <person name="Kalman S."/>
            <person name="Kleine K."/>
            <person name="Komp C."/>
            <person name="Kurdi O."/>
            <person name="Lashkari D."/>
            <person name="Lew H."/>
            <person name="Lin A."/>
            <person name="Lin D."/>
            <person name="Louis E.J."/>
            <person name="Marathe R."/>
            <person name="Messenguy F."/>
            <person name="Mewes H.-W."/>
            <person name="Mirtipati S."/>
            <person name="Moestl D."/>
            <person name="Mueller-Auer S."/>
            <person name="Namath A."/>
            <person name="Nentwich U."/>
            <person name="Oefner P."/>
            <person name="Pearson D."/>
            <person name="Petel F.X."/>
            <person name="Pohl T.M."/>
            <person name="Purnelle B."/>
            <person name="Rajandream M.A."/>
            <person name="Rechmann S."/>
            <person name="Rieger M."/>
            <person name="Riles L."/>
            <person name="Roberts D."/>
            <person name="Schaefer M."/>
            <person name="Scharfe M."/>
            <person name="Scherens B."/>
            <person name="Schramm S."/>
            <person name="Schroeder M."/>
            <person name="Sdicu A.-M."/>
            <person name="Tettelin H."/>
            <person name="Urrestarazu L.A."/>
            <person name="Ushinsky S."/>
            <person name="Vierendeels F."/>
            <person name="Vissers S."/>
            <person name="Voss H."/>
            <person name="Walsh S.V."/>
            <person name="Wambutt R."/>
            <person name="Wang Y."/>
            <person name="Wedler E."/>
            <person name="Wedler H."/>
            <person name="Winnett E."/>
            <person name="Zhong W.-W."/>
            <person name="Zollner A."/>
            <person name="Vo D.H."/>
            <person name="Hani J."/>
        </authorList>
    </citation>
    <scope>NUCLEOTIDE SEQUENCE [LARGE SCALE GENOMIC DNA]</scope>
    <source>
        <strain>ATCC 204508 / S288c</strain>
    </source>
</reference>
<reference key="3">
    <citation type="journal article" date="2014" name="G3 (Bethesda)">
        <title>The reference genome sequence of Saccharomyces cerevisiae: Then and now.</title>
        <authorList>
            <person name="Engel S.R."/>
            <person name="Dietrich F.S."/>
            <person name="Fisk D.G."/>
            <person name="Binkley G."/>
            <person name="Balakrishnan R."/>
            <person name="Costanzo M.C."/>
            <person name="Dwight S.S."/>
            <person name="Hitz B.C."/>
            <person name="Karra K."/>
            <person name="Nash R.S."/>
            <person name="Weng S."/>
            <person name="Wong E.D."/>
            <person name="Lloyd P."/>
            <person name="Skrzypek M.S."/>
            <person name="Miyasato S.R."/>
            <person name="Simison M."/>
            <person name="Cherry J.M."/>
        </authorList>
    </citation>
    <scope>GENOME REANNOTATION</scope>
    <source>
        <strain>ATCC 204508 / S288c</strain>
    </source>
</reference>
<reference key="4">
    <citation type="journal article" date="2001" name="Biochim. Biophys. Acta">
        <title>Identification of functional regions of Cbp3p, an enzyme-specific chaperone required for the assembly of ubiquinol-cytochrome c reductase in yeast mitochondria.</title>
        <authorList>
            <person name="Shi G."/>
            <person name="Crivellone M.D."/>
            <person name="Edderkaoui B."/>
        </authorList>
    </citation>
    <scope>CHARACTERIZATION</scope>
</reference>
<reference key="5">
    <citation type="journal article" date="2003" name="Nature">
        <title>Global analysis of protein expression in yeast.</title>
        <authorList>
            <person name="Ghaemmaghami S."/>
            <person name="Huh W.-K."/>
            <person name="Bower K."/>
            <person name="Howson R.W."/>
            <person name="Belle A."/>
            <person name="Dephoure N."/>
            <person name="O'Shea E.K."/>
            <person name="Weissman J.S."/>
        </authorList>
    </citation>
    <scope>LEVEL OF PROTEIN EXPRESSION [LARGE SCALE ANALYSIS]</scope>
</reference>
<gene>
    <name type="primary">CBP3</name>
    <name type="ordered locus">YPL215W</name>
    <name type="ORF">P1775</name>
</gene>
<organism>
    <name type="scientific">Saccharomyces cerevisiae (strain ATCC 204508 / S288c)</name>
    <name type="common">Baker's yeast</name>
    <dbReference type="NCBI Taxonomy" id="559292"/>
    <lineage>
        <taxon>Eukaryota</taxon>
        <taxon>Fungi</taxon>
        <taxon>Dikarya</taxon>
        <taxon>Ascomycota</taxon>
        <taxon>Saccharomycotina</taxon>
        <taxon>Saccharomycetes</taxon>
        <taxon>Saccharomycetales</taxon>
        <taxon>Saccharomycetaceae</taxon>
        <taxon>Saccharomyces</taxon>
    </lineage>
</organism>
<keyword id="KW-0143">Chaperone</keyword>
<keyword id="KW-0472">Membrane</keyword>
<keyword id="KW-0496">Mitochondrion</keyword>
<keyword id="KW-1185">Reference proteome</keyword>
<keyword id="KW-0809">Transit peptide</keyword>
<keyword id="KW-0812">Transmembrane</keyword>
<keyword id="KW-1133">Transmembrane helix</keyword>
<evidence type="ECO:0000255" key="1"/>
<evidence type="ECO:0000269" key="2">
    <source>
    </source>
</evidence>
<evidence type="ECO:0000305" key="3"/>
<name>CBP3_YEAST</name>
<protein>
    <recommendedName>
        <fullName>Protein CBP3, mitochondrial</fullName>
    </recommendedName>
</protein>
<feature type="transit peptide" description="Mitochondrion" evidence="1">
    <location>
        <begin position="1"/>
        <end position="38"/>
    </location>
</feature>
<feature type="chain" id="PRO_0000004775" description="Protein CBP3, mitochondrial">
    <location>
        <begin position="39"/>
        <end position="335"/>
    </location>
</feature>
<feature type="transmembrane region" description="Helical" evidence="1">
    <location>
        <begin position="152"/>
        <end position="169"/>
    </location>
</feature>
<dbReference type="EMBL" id="J04830">
    <property type="protein sequence ID" value="AAA34475.1"/>
    <property type="molecule type" value="Genomic_DNA"/>
</dbReference>
<dbReference type="EMBL" id="Z73571">
    <property type="protein sequence ID" value="CAA97930.1"/>
    <property type="molecule type" value="Genomic_DNA"/>
</dbReference>
<dbReference type="EMBL" id="BK006949">
    <property type="protein sequence ID" value="DAA11221.1"/>
    <property type="molecule type" value="Genomic_DNA"/>
</dbReference>
<dbReference type="PIR" id="A34290">
    <property type="entry name" value="A34290"/>
</dbReference>
<dbReference type="RefSeq" id="NP_015109.1">
    <property type="nucleotide sequence ID" value="NM_001184029.1"/>
</dbReference>
<dbReference type="SMR" id="P21560"/>
<dbReference type="BioGRID" id="35970">
    <property type="interactions" value="84"/>
</dbReference>
<dbReference type="ComplexPortal" id="CPX-384">
    <property type="entry name" value="CBP3-CBP6 complex"/>
</dbReference>
<dbReference type="DIP" id="DIP-69N"/>
<dbReference type="FunCoup" id="P21560">
    <property type="interactions" value="138"/>
</dbReference>
<dbReference type="IntAct" id="P21560">
    <property type="interactions" value="12"/>
</dbReference>
<dbReference type="MINT" id="P21560"/>
<dbReference type="STRING" id="4932.YPL215W"/>
<dbReference type="iPTMnet" id="P21560"/>
<dbReference type="PaxDb" id="4932-YPL215W"/>
<dbReference type="PeptideAtlas" id="P21560"/>
<dbReference type="EnsemblFungi" id="YPL215W_mRNA">
    <property type="protein sequence ID" value="YPL215W"/>
    <property type="gene ID" value="YPL215W"/>
</dbReference>
<dbReference type="GeneID" id="855886"/>
<dbReference type="KEGG" id="sce:YPL215W"/>
<dbReference type="AGR" id="SGD:S000006136"/>
<dbReference type="SGD" id="S000006136">
    <property type="gene designation" value="CBP3"/>
</dbReference>
<dbReference type="VEuPathDB" id="FungiDB:YPL215W"/>
<dbReference type="eggNOG" id="KOG2873">
    <property type="taxonomic scope" value="Eukaryota"/>
</dbReference>
<dbReference type="GeneTree" id="ENSGT00390000018118"/>
<dbReference type="HOGENOM" id="CLU_051390_1_0_1"/>
<dbReference type="InParanoid" id="P21560"/>
<dbReference type="OMA" id="FSQWFQI"/>
<dbReference type="OrthoDB" id="10253878at2759"/>
<dbReference type="BioCyc" id="YEAST:G3O-34104-MONOMER"/>
<dbReference type="Reactome" id="R-SCE-9865878">
    <property type="pathway name" value="Complex III assembly"/>
</dbReference>
<dbReference type="BioGRID-ORCS" id="855886">
    <property type="hits" value="8 hits in 10 CRISPR screens"/>
</dbReference>
<dbReference type="PRO" id="PR:P21560"/>
<dbReference type="Proteomes" id="UP000002311">
    <property type="component" value="Chromosome XVI"/>
</dbReference>
<dbReference type="RNAct" id="P21560">
    <property type="molecule type" value="protein"/>
</dbReference>
<dbReference type="GO" id="GO:0061671">
    <property type="term" value="C:Cbp3p-Cbp6 complex"/>
    <property type="evidence" value="ECO:0000353"/>
    <property type="project" value="ComplexPortal"/>
</dbReference>
<dbReference type="GO" id="GO:0005743">
    <property type="term" value="C:mitochondrial inner membrane"/>
    <property type="evidence" value="ECO:0000304"/>
    <property type="project" value="Reactome"/>
</dbReference>
<dbReference type="GO" id="GO:0031966">
    <property type="term" value="C:mitochondrial membrane"/>
    <property type="evidence" value="ECO:0000314"/>
    <property type="project" value="SGD"/>
</dbReference>
<dbReference type="GO" id="GO:0005761">
    <property type="term" value="C:mitochondrial ribosome"/>
    <property type="evidence" value="ECO:0000314"/>
    <property type="project" value="SGD"/>
</dbReference>
<dbReference type="GO" id="GO:0005739">
    <property type="term" value="C:mitochondrion"/>
    <property type="evidence" value="ECO:0000314"/>
    <property type="project" value="SGD"/>
</dbReference>
<dbReference type="GO" id="GO:0003729">
    <property type="term" value="F:mRNA binding"/>
    <property type="evidence" value="ECO:0000314"/>
    <property type="project" value="SGD"/>
</dbReference>
<dbReference type="GO" id="GO:0043022">
    <property type="term" value="F:ribosome binding"/>
    <property type="evidence" value="ECO:0000314"/>
    <property type="project" value="SGD"/>
</dbReference>
<dbReference type="GO" id="GO:0034551">
    <property type="term" value="P:mitochondrial respiratory chain complex III assembly"/>
    <property type="evidence" value="ECO:0000314"/>
    <property type="project" value="ComplexPortal"/>
</dbReference>
<dbReference type="GO" id="GO:0070131">
    <property type="term" value="P:positive regulation of mitochondrial translation"/>
    <property type="evidence" value="ECO:0000315"/>
    <property type="project" value="SGD"/>
</dbReference>
<dbReference type="GO" id="GO:0050821">
    <property type="term" value="P:protein stabilization"/>
    <property type="evidence" value="ECO:0000314"/>
    <property type="project" value="ComplexPortal"/>
</dbReference>
<dbReference type="InterPro" id="IPR021150">
    <property type="entry name" value="Ubiq_cyt_c_chap"/>
</dbReference>
<dbReference type="InterPro" id="IPR007129">
    <property type="entry name" value="Ubiqinol_cyt_c_chaperone_CPB3"/>
</dbReference>
<dbReference type="PANTHER" id="PTHR12184">
    <property type="entry name" value="UBIQUINOL-CYTOCHROME C REDUCTASE COMPLEX ASSEMBLY FACTOR 1 FAMILY MEMBER"/>
    <property type="match status" value="1"/>
</dbReference>
<dbReference type="PANTHER" id="PTHR12184:SF1">
    <property type="entry name" value="UBIQUINOL-CYTOCHROME-C REDUCTASE COMPLEX ASSEMBLY FACTOR 1"/>
    <property type="match status" value="1"/>
</dbReference>
<dbReference type="Pfam" id="PF03981">
    <property type="entry name" value="Ubiq_cyt_C_chap"/>
    <property type="match status" value="1"/>
</dbReference>
<sequence>MMSVNRFTSGRLPVFLRKSPFYYSRAYLHQTCVFKQNKETAQDSPELLAKSSHLNSKPLDVSNKAPVKTAQNKIPLAHSKYESSKYELPKWKEALGELVIRAFHLDMDRVRAGPVAGSYYYKICKEQGLQYEDEPLSETAKYFYEDLKLPRTFSQWFQITVLHEWILFVRMRAMPFKYGRNYQQKLVDRTFSDIELRLFEEMKVNSGRIADQYLKDFNTQLRGAIFAYDEGFATDDGTLATAVWRNLFGGRKNIDMVHLESVVRYIYSQLYVLSRLSDREFATGKFKFVPPGVKVEKLTPKQEEELKAKTIAKYEALDKDPKTLPSERSRLSYTN</sequence>
<proteinExistence type="evidence at protein level"/>